<accession>A9MFB7</accession>
<sequence length="99" mass="11352">MALTKAEMSEYLFDKLGLSKRDAKELVELFFEEIRRALENGEQVKLSGFGNFDLRDKNQRPGRNPKTGEDIPITARRVVTFRPGQKLKSRVENAAPKEE</sequence>
<name>IHFA_SALAR</name>
<dbReference type="EMBL" id="CP000880">
    <property type="protein sequence ID" value="ABX21522.1"/>
    <property type="molecule type" value="Genomic_DNA"/>
</dbReference>
<dbReference type="SMR" id="A9MFB7"/>
<dbReference type="STRING" id="41514.SARI_01630"/>
<dbReference type="KEGG" id="ses:SARI_01630"/>
<dbReference type="HOGENOM" id="CLU_105066_1_3_6"/>
<dbReference type="Proteomes" id="UP000002084">
    <property type="component" value="Chromosome"/>
</dbReference>
<dbReference type="GO" id="GO:0005829">
    <property type="term" value="C:cytosol"/>
    <property type="evidence" value="ECO:0007669"/>
    <property type="project" value="TreeGrafter"/>
</dbReference>
<dbReference type="GO" id="GO:0003677">
    <property type="term" value="F:DNA binding"/>
    <property type="evidence" value="ECO:0007669"/>
    <property type="project" value="UniProtKB-UniRule"/>
</dbReference>
<dbReference type="GO" id="GO:0030527">
    <property type="term" value="F:structural constituent of chromatin"/>
    <property type="evidence" value="ECO:0007669"/>
    <property type="project" value="InterPro"/>
</dbReference>
<dbReference type="GO" id="GO:0006310">
    <property type="term" value="P:DNA recombination"/>
    <property type="evidence" value="ECO:0007669"/>
    <property type="project" value="UniProtKB-UniRule"/>
</dbReference>
<dbReference type="GO" id="GO:0009893">
    <property type="term" value="P:positive regulation of metabolic process"/>
    <property type="evidence" value="ECO:0007669"/>
    <property type="project" value="UniProtKB-ARBA"/>
</dbReference>
<dbReference type="GO" id="GO:0006355">
    <property type="term" value="P:regulation of DNA-templated transcription"/>
    <property type="evidence" value="ECO:0007669"/>
    <property type="project" value="UniProtKB-UniRule"/>
</dbReference>
<dbReference type="GO" id="GO:0006417">
    <property type="term" value="P:regulation of translation"/>
    <property type="evidence" value="ECO:0007669"/>
    <property type="project" value="UniProtKB-UniRule"/>
</dbReference>
<dbReference type="CDD" id="cd13835">
    <property type="entry name" value="IHF_A"/>
    <property type="match status" value="1"/>
</dbReference>
<dbReference type="FunFam" id="4.10.520.10:FF:000002">
    <property type="entry name" value="Integration host factor subunit alpha"/>
    <property type="match status" value="1"/>
</dbReference>
<dbReference type="Gene3D" id="4.10.520.10">
    <property type="entry name" value="IHF-like DNA-binding proteins"/>
    <property type="match status" value="1"/>
</dbReference>
<dbReference type="HAMAP" id="MF_00380">
    <property type="entry name" value="IHF_alpha"/>
    <property type="match status" value="1"/>
</dbReference>
<dbReference type="InterPro" id="IPR000119">
    <property type="entry name" value="Hist_DNA-bd"/>
</dbReference>
<dbReference type="InterPro" id="IPR020816">
    <property type="entry name" value="Histone-like_DNA-bd_CS"/>
</dbReference>
<dbReference type="InterPro" id="IPR010992">
    <property type="entry name" value="IHF-like_DNA-bd_dom_sf"/>
</dbReference>
<dbReference type="InterPro" id="IPR005684">
    <property type="entry name" value="IHF_alpha"/>
</dbReference>
<dbReference type="NCBIfam" id="TIGR00987">
    <property type="entry name" value="himA"/>
    <property type="match status" value="1"/>
</dbReference>
<dbReference type="NCBIfam" id="NF001401">
    <property type="entry name" value="PRK00285.1"/>
    <property type="match status" value="1"/>
</dbReference>
<dbReference type="PANTHER" id="PTHR33175">
    <property type="entry name" value="DNA-BINDING PROTEIN HU"/>
    <property type="match status" value="1"/>
</dbReference>
<dbReference type="PANTHER" id="PTHR33175:SF2">
    <property type="entry name" value="INTEGRATION HOST FACTOR SUBUNIT ALPHA"/>
    <property type="match status" value="1"/>
</dbReference>
<dbReference type="Pfam" id="PF00216">
    <property type="entry name" value="Bac_DNA_binding"/>
    <property type="match status" value="1"/>
</dbReference>
<dbReference type="PRINTS" id="PR01727">
    <property type="entry name" value="DNABINDINGHU"/>
</dbReference>
<dbReference type="SMART" id="SM00411">
    <property type="entry name" value="BHL"/>
    <property type="match status" value="1"/>
</dbReference>
<dbReference type="SUPFAM" id="SSF47729">
    <property type="entry name" value="IHF-like DNA-binding proteins"/>
    <property type="match status" value="1"/>
</dbReference>
<dbReference type="PROSITE" id="PS00045">
    <property type="entry name" value="HISTONE_LIKE"/>
    <property type="match status" value="1"/>
</dbReference>
<gene>
    <name evidence="1" type="primary">ihfA</name>
    <name evidence="1" type="synonym">himA</name>
    <name type="ordered locus">SARI_01630</name>
</gene>
<evidence type="ECO:0000255" key="1">
    <source>
        <dbReference type="HAMAP-Rule" id="MF_00380"/>
    </source>
</evidence>
<evidence type="ECO:0000256" key="2">
    <source>
        <dbReference type="SAM" id="MobiDB-lite"/>
    </source>
</evidence>
<protein>
    <recommendedName>
        <fullName evidence="1">Integration host factor subunit alpha</fullName>
        <shortName evidence="1">IHF-alpha</shortName>
    </recommendedName>
</protein>
<reference key="1">
    <citation type="submission" date="2007-11" db="EMBL/GenBank/DDBJ databases">
        <authorList>
            <consortium name="The Salmonella enterica serovar Arizonae Genome Sequencing Project"/>
            <person name="McClelland M."/>
            <person name="Sanderson E.K."/>
            <person name="Porwollik S."/>
            <person name="Spieth J."/>
            <person name="Clifton W.S."/>
            <person name="Fulton R."/>
            <person name="Chunyan W."/>
            <person name="Wollam A."/>
            <person name="Shah N."/>
            <person name="Pepin K."/>
            <person name="Bhonagiri V."/>
            <person name="Nash W."/>
            <person name="Johnson M."/>
            <person name="Thiruvilangam P."/>
            <person name="Wilson R."/>
        </authorList>
    </citation>
    <scope>NUCLEOTIDE SEQUENCE [LARGE SCALE GENOMIC DNA]</scope>
    <source>
        <strain>ATCC BAA-731 / CDC346-86 / RSK2980</strain>
    </source>
</reference>
<comment type="function">
    <text evidence="1">This protein is one of the two subunits of integration host factor, a specific DNA-binding protein that functions in genetic recombination as well as in transcriptional and translational control.</text>
</comment>
<comment type="subunit">
    <text evidence="1">Heterodimer of an alpha and a beta chain.</text>
</comment>
<comment type="similarity">
    <text evidence="1">Belongs to the bacterial histone-like protein family.</text>
</comment>
<keyword id="KW-0233">DNA recombination</keyword>
<keyword id="KW-0238">DNA-binding</keyword>
<keyword id="KW-1185">Reference proteome</keyword>
<keyword id="KW-0804">Transcription</keyword>
<keyword id="KW-0805">Transcription regulation</keyword>
<keyword id="KW-0810">Translation regulation</keyword>
<organism>
    <name type="scientific">Salmonella arizonae (strain ATCC BAA-731 / CDC346-86 / RSK2980)</name>
    <dbReference type="NCBI Taxonomy" id="41514"/>
    <lineage>
        <taxon>Bacteria</taxon>
        <taxon>Pseudomonadati</taxon>
        <taxon>Pseudomonadota</taxon>
        <taxon>Gammaproteobacteria</taxon>
        <taxon>Enterobacterales</taxon>
        <taxon>Enterobacteriaceae</taxon>
        <taxon>Salmonella</taxon>
    </lineage>
</organism>
<feature type="chain" id="PRO_1000080035" description="Integration host factor subunit alpha">
    <location>
        <begin position="1"/>
        <end position="99"/>
    </location>
</feature>
<feature type="region of interest" description="Disordered" evidence="2">
    <location>
        <begin position="49"/>
        <end position="75"/>
    </location>
</feature>
<proteinExistence type="inferred from homology"/>